<gene>
    <name evidence="1" type="primary">sfsA</name>
    <name type="ordered locus">RC1_3392</name>
</gene>
<protein>
    <recommendedName>
        <fullName evidence="1">Sugar fermentation stimulation protein homolog</fullName>
    </recommendedName>
</protein>
<proteinExistence type="inferred from homology"/>
<feature type="chain" id="PRO_1000093584" description="Sugar fermentation stimulation protein homolog">
    <location>
        <begin position="1"/>
        <end position="233"/>
    </location>
</feature>
<sequence length="233" mass="24996">MRFPTPLIPATLVRRYKRFLADVLLPDGTAATAHVANSGTMLGIDAPGSPVWLSRSPNPARKLPYTLELVEADGTLVGCNTAHPNRIVAEAVAAGEIPALAGYATLRREVKYGRNSRIDLLLEDPVRGSAYVEVKNVHLRRQGRLAEFPDCVTSRGAKHLEELAAMVAAGHRAVMVYLVQRADCDTFRIAADIDPAYAAGLRVALDHGVEALVLGCALTPDGIGIDRTLRLSA</sequence>
<reference key="1">
    <citation type="submission" date="2007-03" db="EMBL/GenBank/DDBJ databases">
        <title>Genome sequence of Rhodospirillum centenum.</title>
        <authorList>
            <person name="Touchman J.W."/>
            <person name="Bauer C."/>
            <person name="Blankenship R.E."/>
        </authorList>
    </citation>
    <scope>NUCLEOTIDE SEQUENCE [LARGE SCALE GENOMIC DNA]</scope>
    <source>
        <strain>ATCC 51521 / SW</strain>
    </source>
</reference>
<evidence type="ECO:0000255" key="1">
    <source>
        <dbReference type="HAMAP-Rule" id="MF_00095"/>
    </source>
</evidence>
<name>SFSA_RHOCS</name>
<comment type="similarity">
    <text evidence="1">Belongs to the SfsA family.</text>
</comment>
<dbReference type="EMBL" id="CP000613">
    <property type="protein sequence ID" value="ACJ00752.1"/>
    <property type="molecule type" value="Genomic_DNA"/>
</dbReference>
<dbReference type="RefSeq" id="WP_012568530.1">
    <property type="nucleotide sequence ID" value="NC_011420.2"/>
</dbReference>
<dbReference type="SMR" id="B6IWS8"/>
<dbReference type="STRING" id="414684.RC1_3392"/>
<dbReference type="KEGG" id="rce:RC1_3392"/>
<dbReference type="eggNOG" id="COG1489">
    <property type="taxonomic scope" value="Bacteria"/>
</dbReference>
<dbReference type="HOGENOM" id="CLU_052299_2_0_5"/>
<dbReference type="OrthoDB" id="9802365at2"/>
<dbReference type="Proteomes" id="UP000001591">
    <property type="component" value="Chromosome"/>
</dbReference>
<dbReference type="GO" id="GO:0003677">
    <property type="term" value="F:DNA binding"/>
    <property type="evidence" value="ECO:0007669"/>
    <property type="project" value="InterPro"/>
</dbReference>
<dbReference type="CDD" id="cd22359">
    <property type="entry name" value="SfsA-like_bacterial"/>
    <property type="match status" value="1"/>
</dbReference>
<dbReference type="Gene3D" id="2.40.50.580">
    <property type="match status" value="1"/>
</dbReference>
<dbReference type="Gene3D" id="3.40.1350.60">
    <property type="match status" value="1"/>
</dbReference>
<dbReference type="HAMAP" id="MF_00095">
    <property type="entry name" value="SfsA"/>
    <property type="match status" value="1"/>
</dbReference>
<dbReference type="InterPro" id="IPR005224">
    <property type="entry name" value="SfsA"/>
</dbReference>
<dbReference type="InterPro" id="IPR040452">
    <property type="entry name" value="SfsA_C"/>
</dbReference>
<dbReference type="InterPro" id="IPR041465">
    <property type="entry name" value="SfsA_N"/>
</dbReference>
<dbReference type="NCBIfam" id="TIGR00230">
    <property type="entry name" value="sfsA"/>
    <property type="match status" value="1"/>
</dbReference>
<dbReference type="PANTHER" id="PTHR30545">
    <property type="entry name" value="SUGAR FERMENTATION STIMULATION PROTEIN A"/>
    <property type="match status" value="1"/>
</dbReference>
<dbReference type="PANTHER" id="PTHR30545:SF2">
    <property type="entry name" value="SUGAR FERMENTATION STIMULATION PROTEIN A"/>
    <property type="match status" value="1"/>
</dbReference>
<dbReference type="Pfam" id="PF03749">
    <property type="entry name" value="SfsA"/>
    <property type="match status" value="1"/>
</dbReference>
<dbReference type="Pfam" id="PF17746">
    <property type="entry name" value="SfsA_N"/>
    <property type="match status" value="1"/>
</dbReference>
<organism>
    <name type="scientific">Rhodospirillum centenum (strain ATCC 51521 / SW)</name>
    <dbReference type="NCBI Taxonomy" id="414684"/>
    <lineage>
        <taxon>Bacteria</taxon>
        <taxon>Pseudomonadati</taxon>
        <taxon>Pseudomonadota</taxon>
        <taxon>Alphaproteobacteria</taxon>
        <taxon>Rhodospirillales</taxon>
        <taxon>Rhodospirillaceae</taxon>
        <taxon>Rhodospirillum</taxon>
    </lineage>
</organism>
<accession>B6IWS8</accession>
<keyword id="KW-1185">Reference proteome</keyword>